<organism>
    <name type="scientific">Vibrio parahaemolyticus serotype O3:K6 (strain RIMD 2210633)</name>
    <dbReference type="NCBI Taxonomy" id="223926"/>
    <lineage>
        <taxon>Bacteria</taxon>
        <taxon>Pseudomonadati</taxon>
        <taxon>Pseudomonadota</taxon>
        <taxon>Gammaproteobacteria</taxon>
        <taxon>Vibrionales</taxon>
        <taxon>Vibrionaceae</taxon>
        <taxon>Vibrio</taxon>
    </lineage>
</organism>
<proteinExistence type="inferred from homology"/>
<gene>
    <name evidence="1" type="primary">murE</name>
    <name type="ordered locus">VP0455</name>
</gene>
<reference key="1">
    <citation type="journal article" date="2003" name="Lancet">
        <title>Genome sequence of Vibrio parahaemolyticus: a pathogenic mechanism distinct from that of V. cholerae.</title>
        <authorList>
            <person name="Makino K."/>
            <person name="Oshima K."/>
            <person name="Kurokawa K."/>
            <person name="Yokoyama K."/>
            <person name="Uda T."/>
            <person name="Tagomori K."/>
            <person name="Iijima Y."/>
            <person name="Najima M."/>
            <person name="Nakano M."/>
            <person name="Yamashita A."/>
            <person name="Kubota Y."/>
            <person name="Kimura S."/>
            <person name="Yasunaga T."/>
            <person name="Honda T."/>
            <person name="Shinagawa H."/>
            <person name="Hattori M."/>
            <person name="Iida T."/>
        </authorList>
    </citation>
    <scope>NUCLEOTIDE SEQUENCE [LARGE SCALE GENOMIC DNA]</scope>
    <source>
        <strain>RIMD 2210633</strain>
    </source>
</reference>
<protein>
    <recommendedName>
        <fullName evidence="1">UDP-N-acetylmuramoyl-L-alanyl-D-glutamate--2,6-diaminopimelate ligase</fullName>
        <ecNumber evidence="1">6.3.2.13</ecNumber>
    </recommendedName>
    <alternativeName>
        <fullName evidence="1">Meso-A2pm-adding enzyme</fullName>
    </alternativeName>
    <alternativeName>
        <fullName evidence="1">Meso-diaminopimelate-adding enzyme</fullName>
    </alternativeName>
    <alternativeName>
        <fullName evidence="1">UDP-MurNAc-L-Ala-D-Glu:meso-diaminopimelate ligase</fullName>
    </alternativeName>
    <alternativeName>
        <fullName evidence="1">UDP-MurNAc-tripeptide synthetase</fullName>
    </alternativeName>
    <alternativeName>
        <fullName evidence="1">UDP-N-acetylmuramyl-tripeptide synthetase</fullName>
    </alternativeName>
</protein>
<keyword id="KW-0067">ATP-binding</keyword>
<keyword id="KW-0131">Cell cycle</keyword>
<keyword id="KW-0132">Cell division</keyword>
<keyword id="KW-0133">Cell shape</keyword>
<keyword id="KW-0961">Cell wall biogenesis/degradation</keyword>
<keyword id="KW-0963">Cytoplasm</keyword>
<keyword id="KW-0436">Ligase</keyword>
<keyword id="KW-0460">Magnesium</keyword>
<keyword id="KW-0547">Nucleotide-binding</keyword>
<keyword id="KW-0573">Peptidoglycan synthesis</keyword>
<sequence length="493" mass="52986">MTKAISMDALLSPWVDCPSLASVLVSELELDSRKVQPGTTFVALVGHVVDGRKFIASAIEKGANAVIAQACDVKAHGTIDIIDDIPVVYLDALDKCLSEIAGQLYTYPDMKLIGVTGTNGKTTITQLIAQWIGLVGSKAAVMGTTGNGFLDDLKEAANTTGNAVEIQHTLASLAEQQAQYTALEVSSHGLIQGRVKSLSFAAGVFTNLSRDHLDYHGTMEEYANAKLTLFTQHQCAQAIINVDDEVGAAWAKQLTNAIAVSLAPTTEFEHALWASQVAYAESGITIRFDGQFGEGTLHAPLIGEFNAANLMLAFATLLSLGFDKSDLLATAAQLQPVLGRMELFQAEHRAKVVVDYAHTPDALEKALQALRVHCDGQLWAIFGCGGDRDAGKRPMMAEIAERLGDKVVLTDDNPRSEDPVLIVKDMLAGLSKPAEAIVQHDRFKALFYALENAAPQDIILLAGKGHEDYQIRNGETIHYSDRESAMQLLGLSS</sequence>
<feature type="chain" id="PRO_0000101968" description="UDP-N-acetylmuramoyl-L-alanyl-D-glutamate--2,6-diaminopimelate ligase">
    <location>
        <begin position="1"/>
        <end position="493"/>
    </location>
</feature>
<feature type="short sequence motif" description="Meso-diaminopimelate recognition motif">
    <location>
        <begin position="412"/>
        <end position="415"/>
    </location>
</feature>
<feature type="binding site" evidence="1">
    <location>
        <position position="30"/>
    </location>
    <ligand>
        <name>UDP-N-acetyl-alpha-D-muramoyl-L-alanyl-D-glutamate</name>
        <dbReference type="ChEBI" id="CHEBI:83900"/>
    </ligand>
</feature>
<feature type="binding site" evidence="1">
    <location>
        <position position="32"/>
    </location>
    <ligand>
        <name>UDP-N-acetyl-alpha-D-muramoyl-L-alanyl-D-glutamate</name>
        <dbReference type="ChEBI" id="CHEBI:83900"/>
    </ligand>
</feature>
<feature type="binding site" evidence="1">
    <location>
        <begin position="117"/>
        <end position="123"/>
    </location>
    <ligand>
        <name>ATP</name>
        <dbReference type="ChEBI" id="CHEBI:30616"/>
    </ligand>
</feature>
<feature type="binding site" evidence="1">
    <location>
        <position position="158"/>
    </location>
    <ligand>
        <name>UDP-N-acetyl-alpha-D-muramoyl-L-alanyl-D-glutamate</name>
        <dbReference type="ChEBI" id="CHEBI:83900"/>
    </ligand>
</feature>
<feature type="binding site" evidence="1">
    <location>
        <begin position="159"/>
        <end position="160"/>
    </location>
    <ligand>
        <name>UDP-N-acetyl-alpha-D-muramoyl-L-alanyl-D-glutamate</name>
        <dbReference type="ChEBI" id="CHEBI:83900"/>
    </ligand>
</feature>
<feature type="binding site" evidence="1">
    <location>
        <position position="186"/>
    </location>
    <ligand>
        <name>UDP-N-acetyl-alpha-D-muramoyl-L-alanyl-D-glutamate</name>
        <dbReference type="ChEBI" id="CHEBI:83900"/>
    </ligand>
</feature>
<feature type="binding site" evidence="1">
    <location>
        <position position="192"/>
    </location>
    <ligand>
        <name>UDP-N-acetyl-alpha-D-muramoyl-L-alanyl-D-glutamate</name>
        <dbReference type="ChEBI" id="CHEBI:83900"/>
    </ligand>
</feature>
<feature type="binding site" evidence="1">
    <location>
        <position position="194"/>
    </location>
    <ligand>
        <name>UDP-N-acetyl-alpha-D-muramoyl-L-alanyl-D-glutamate</name>
        <dbReference type="ChEBI" id="CHEBI:83900"/>
    </ligand>
</feature>
<feature type="binding site" evidence="1">
    <location>
        <position position="388"/>
    </location>
    <ligand>
        <name>meso-2,6-diaminopimelate</name>
        <dbReference type="ChEBI" id="CHEBI:57791"/>
    </ligand>
</feature>
<feature type="binding site" evidence="1">
    <location>
        <begin position="412"/>
        <end position="415"/>
    </location>
    <ligand>
        <name>meso-2,6-diaminopimelate</name>
        <dbReference type="ChEBI" id="CHEBI:57791"/>
    </ligand>
</feature>
<feature type="binding site" evidence="1">
    <location>
        <position position="463"/>
    </location>
    <ligand>
        <name>meso-2,6-diaminopimelate</name>
        <dbReference type="ChEBI" id="CHEBI:57791"/>
    </ligand>
</feature>
<feature type="binding site" evidence="1">
    <location>
        <position position="467"/>
    </location>
    <ligand>
        <name>meso-2,6-diaminopimelate</name>
        <dbReference type="ChEBI" id="CHEBI:57791"/>
    </ligand>
</feature>
<feature type="modified residue" description="N6-carboxylysine" evidence="1">
    <location>
        <position position="226"/>
    </location>
</feature>
<comment type="function">
    <text evidence="1">Catalyzes the addition of meso-diaminopimelic acid to the nucleotide precursor UDP-N-acetylmuramoyl-L-alanyl-D-glutamate (UMAG) in the biosynthesis of bacterial cell-wall peptidoglycan.</text>
</comment>
<comment type="catalytic activity">
    <reaction evidence="1">
        <text>UDP-N-acetyl-alpha-D-muramoyl-L-alanyl-D-glutamate + meso-2,6-diaminopimelate + ATP = UDP-N-acetyl-alpha-D-muramoyl-L-alanyl-gamma-D-glutamyl-meso-2,6-diaminopimelate + ADP + phosphate + H(+)</text>
        <dbReference type="Rhea" id="RHEA:23676"/>
        <dbReference type="ChEBI" id="CHEBI:15378"/>
        <dbReference type="ChEBI" id="CHEBI:30616"/>
        <dbReference type="ChEBI" id="CHEBI:43474"/>
        <dbReference type="ChEBI" id="CHEBI:57791"/>
        <dbReference type="ChEBI" id="CHEBI:83900"/>
        <dbReference type="ChEBI" id="CHEBI:83905"/>
        <dbReference type="ChEBI" id="CHEBI:456216"/>
        <dbReference type="EC" id="6.3.2.13"/>
    </reaction>
</comment>
<comment type="cofactor">
    <cofactor evidence="1">
        <name>Mg(2+)</name>
        <dbReference type="ChEBI" id="CHEBI:18420"/>
    </cofactor>
</comment>
<comment type="pathway">
    <text evidence="1">Cell wall biogenesis; peptidoglycan biosynthesis.</text>
</comment>
<comment type="subcellular location">
    <subcellularLocation>
        <location evidence="1">Cytoplasm</location>
    </subcellularLocation>
</comment>
<comment type="PTM">
    <text evidence="1">Carboxylation is probably crucial for Mg(2+) binding and, consequently, for the gamma-phosphate positioning of ATP.</text>
</comment>
<comment type="similarity">
    <text evidence="1">Belongs to the MurCDEF family. MurE subfamily.</text>
</comment>
<evidence type="ECO:0000255" key="1">
    <source>
        <dbReference type="HAMAP-Rule" id="MF_00208"/>
    </source>
</evidence>
<dbReference type="EC" id="6.3.2.13" evidence="1"/>
<dbReference type="EMBL" id="BA000031">
    <property type="protein sequence ID" value="BAC58718.1"/>
    <property type="molecule type" value="Genomic_DNA"/>
</dbReference>
<dbReference type="RefSeq" id="NP_796834.1">
    <property type="nucleotide sequence ID" value="NC_004603.1"/>
</dbReference>
<dbReference type="RefSeq" id="WP_005458180.1">
    <property type="nucleotide sequence ID" value="NC_004603.1"/>
</dbReference>
<dbReference type="SMR" id="Q87SG9"/>
<dbReference type="GeneID" id="1187923"/>
<dbReference type="KEGG" id="vpa:VP0455"/>
<dbReference type="PATRIC" id="fig|223926.6.peg.433"/>
<dbReference type="eggNOG" id="COG0769">
    <property type="taxonomic scope" value="Bacteria"/>
</dbReference>
<dbReference type="HOGENOM" id="CLU_022291_3_2_6"/>
<dbReference type="UniPathway" id="UPA00219"/>
<dbReference type="Proteomes" id="UP000002493">
    <property type="component" value="Chromosome 1"/>
</dbReference>
<dbReference type="GO" id="GO:0005737">
    <property type="term" value="C:cytoplasm"/>
    <property type="evidence" value="ECO:0007669"/>
    <property type="project" value="UniProtKB-SubCell"/>
</dbReference>
<dbReference type="GO" id="GO:0005524">
    <property type="term" value="F:ATP binding"/>
    <property type="evidence" value="ECO:0007669"/>
    <property type="project" value="UniProtKB-UniRule"/>
</dbReference>
<dbReference type="GO" id="GO:0000287">
    <property type="term" value="F:magnesium ion binding"/>
    <property type="evidence" value="ECO:0007669"/>
    <property type="project" value="UniProtKB-UniRule"/>
</dbReference>
<dbReference type="GO" id="GO:0008765">
    <property type="term" value="F:UDP-N-acetylmuramoylalanyl-D-glutamate-2,6-diaminopimelate ligase activity"/>
    <property type="evidence" value="ECO:0007669"/>
    <property type="project" value="UniProtKB-UniRule"/>
</dbReference>
<dbReference type="GO" id="GO:0051301">
    <property type="term" value="P:cell division"/>
    <property type="evidence" value="ECO:0007669"/>
    <property type="project" value="UniProtKB-KW"/>
</dbReference>
<dbReference type="GO" id="GO:0071555">
    <property type="term" value="P:cell wall organization"/>
    <property type="evidence" value="ECO:0007669"/>
    <property type="project" value="UniProtKB-KW"/>
</dbReference>
<dbReference type="GO" id="GO:0009252">
    <property type="term" value="P:peptidoglycan biosynthetic process"/>
    <property type="evidence" value="ECO:0007669"/>
    <property type="project" value="UniProtKB-UniRule"/>
</dbReference>
<dbReference type="GO" id="GO:0008360">
    <property type="term" value="P:regulation of cell shape"/>
    <property type="evidence" value="ECO:0007669"/>
    <property type="project" value="UniProtKB-KW"/>
</dbReference>
<dbReference type="FunFam" id="3.90.190.20:FF:000006">
    <property type="entry name" value="UDP-N-acetylmuramoyl-L-alanyl-D-glutamate--2,6-diaminopimelate ligase"/>
    <property type="match status" value="1"/>
</dbReference>
<dbReference type="Gene3D" id="3.90.190.20">
    <property type="entry name" value="Mur ligase, C-terminal domain"/>
    <property type="match status" value="1"/>
</dbReference>
<dbReference type="Gene3D" id="3.40.1190.10">
    <property type="entry name" value="Mur-like, catalytic domain"/>
    <property type="match status" value="1"/>
</dbReference>
<dbReference type="Gene3D" id="3.40.1390.10">
    <property type="entry name" value="MurE/MurF, N-terminal domain"/>
    <property type="match status" value="1"/>
</dbReference>
<dbReference type="HAMAP" id="MF_00208">
    <property type="entry name" value="MurE"/>
    <property type="match status" value="1"/>
</dbReference>
<dbReference type="InterPro" id="IPR036565">
    <property type="entry name" value="Mur-like_cat_sf"/>
</dbReference>
<dbReference type="InterPro" id="IPR004101">
    <property type="entry name" value="Mur_ligase_C"/>
</dbReference>
<dbReference type="InterPro" id="IPR036615">
    <property type="entry name" value="Mur_ligase_C_dom_sf"/>
</dbReference>
<dbReference type="InterPro" id="IPR013221">
    <property type="entry name" value="Mur_ligase_cen"/>
</dbReference>
<dbReference type="InterPro" id="IPR000713">
    <property type="entry name" value="Mur_ligase_N"/>
</dbReference>
<dbReference type="InterPro" id="IPR035911">
    <property type="entry name" value="MurE/MurF_N"/>
</dbReference>
<dbReference type="InterPro" id="IPR005761">
    <property type="entry name" value="UDP-N-AcMur-Glu-dNH2Pim_ligase"/>
</dbReference>
<dbReference type="NCBIfam" id="TIGR01085">
    <property type="entry name" value="murE"/>
    <property type="match status" value="1"/>
</dbReference>
<dbReference type="NCBIfam" id="NF001123">
    <property type="entry name" value="PRK00139.1-1"/>
    <property type="match status" value="1"/>
</dbReference>
<dbReference type="NCBIfam" id="NF001124">
    <property type="entry name" value="PRK00139.1-2"/>
    <property type="match status" value="1"/>
</dbReference>
<dbReference type="NCBIfam" id="NF001126">
    <property type="entry name" value="PRK00139.1-4"/>
    <property type="match status" value="1"/>
</dbReference>
<dbReference type="PANTHER" id="PTHR23135">
    <property type="entry name" value="MUR LIGASE FAMILY MEMBER"/>
    <property type="match status" value="1"/>
</dbReference>
<dbReference type="PANTHER" id="PTHR23135:SF4">
    <property type="entry name" value="UDP-N-ACETYLMURAMOYL-L-ALANYL-D-GLUTAMATE--2,6-DIAMINOPIMELATE LIGASE MURE HOMOLOG, CHLOROPLASTIC"/>
    <property type="match status" value="1"/>
</dbReference>
<dbReference type="Pfam" id="PF01225">
    <property type="entry name" value="Mur_ligase"/>
    <property type="match status" value="1"/>
</dbReference>
<dbReference type="Pfam" id="PF02875">
    <property type="entry name" value="Mur_ligase_C"/>
    <property type="match status" value="1"/>
</dbReference>
<dbReference type="Pfam" id="PF08245">
    <property type="entry name" value="Mur_ligase_M"/>
    <property type="match status" value="1"/>
</dbReference>
<dbReference type="SUPFAM" id="SSF53623">
    <property type="entry name" value="MurD-like peptide ligases, catalytic domain"/>
    <property type="match status" value="1"/>
</dbReference>
<dbReference type="SUPFAM" id="SSF53244">
    <property type="entry name" value="MurD-like peptide ligases, peptide-binding domain"/>
    <property type="match status" value="1"/>
</dbReference>
<dbReference type="SUPFAM" id="SSF63418">
    <property type="entry name" value="MurE/MurF N-terminal domain"/>
    <property type="match status" value="1"/>
</dbReference>
<name>MURE_VIBPA</name>
<accession>Q87SG9</accession>